<feature type="chain" id="PRO_0000169551" description="Uncharacterized protein YhhH">
    <location>
        <begin position="1"/>
        <end position="127"/>
    </location>
</feature>
<organism>
    <name type="scientific">Escherichia coli (strain K12)</name>
    <dbReference type="NCBI Taxonomy" id="83333"/>
    <lineage>
        <taxon>Bacteria</taxon>
        <taxon>Pseudomonadati</taxon>
        <taxon>Pseudomonadota</taxon>
        <taxon>Gammaproteobacteria</taxon>
        <taxon>Enterobacterales</taxon>
        <taxon>Enterobacteriaceae</taxon>
        <taxon>Escherichia</taxon>
    </lineage>
</organism>
<proteinExistence type="predicted"/>
<dbReference type="EMBL" id="L02370">
    <property type="protein sequence ID" value="AAC61884.1"/>
    <property type="molecule type" value="Genomic_DNA"/>
</dbReference>
<dbReference type="EMBL" id="U16247">
    <property type="protein sequence ID" value="AAA56756.1"/>
    <property type="molecule type" value="Genomic_DNA"/>
</dbReference>
<dbReference type="EMBL" id="U00039">
    <property type="protein sequence ID" value="AAB18458.1"/>
    <property type="status" value="ALT_INIT"/>
    <property type="molecule type" value="Genomic_DNA"/>
</dbReference>
<dbReference type="EMBL" id="U00096">
    <property type="protein sequence ID" value="AAC76508.2"/>
    <property type="molecule type" value="Genomic_DNA"/>
</dbReference>
<dbReference type="EMBL" id="AP009048">
    <property type="protein sequence ID" value="BAE77810.1"/>
    <property type="molecule type" value="Genomic_DNA"/>
</dbReference>
<dbReference type="PIR" id="A36902">
    <property type="entry name" value="A36902"/>
</dbReference>
<dbReference type="PIR" id="S47702">
    <property type="entry name" value="S47702"/>
</dbReference>
<dbReference type="RefSeq" id="NP_417940.2">
    <property type="nucleotide sequence ID" value="NC_000913.3"/>
</dbReference>
<dbReference type="RefSeq" id="WP_001271686.1">
    <property type="nucleotide sequence ID" value="NZ_SSZK01000110.1"/>
</dbReference>
<dbReference type="SMR" id="P28911"/>
<dbReference type="BioGRID" id="4262511">
    <property type="interactions" value="253"/>
</dbReference>
<dbReference type="BioGRID" id="852302">
    <property type="interactions" value="2"/>
</dbReference>
<dbReference type="FunCoup" id="P28911">
    <property type="interactions" value="9"/>
</dbReference>
<dbReference type="IntAct" id="P28911">
    <property type="interactions" value="3"/>
</dbReference>
<dbReference type="STRING" id="511145.b3483"/>
<dbReference type="PaxDb" id="511145-b3483"/>
<dbReference type="DNASU" id="947993"/>
<dbReference type="EnsemblBacteria" id="AAC76508">
    <property type="protein sequence ID" value="AAC76508"/>
    <property type="gene ID" value="b3483"/>
</dbReference>
<dbReference type="GeneID" id="75203865"/>
<dbReference type="GeneID" id="947993"/>
<dbReference type="KEGG" id="ecj:JW3449"/>
<dbReference type="KEGG" id="eco:b3483"/>
<dbReference type="KEGG" id="ecoc:C3026_18860"/>
<dbReference type="PATRIC" id="fig|511145.12.peg.3582"/>
<dbReference type="EchoBASE" id="EB1482"/>
<dbReference type="eggNOG" id="ENOG5033DD7">
    <property type="taxonomic scope" value="Bacteria"/>
</dbReference>
<dbReference type="HOGENOM" id="CLU_161259_0_0_6"/>
<dbReference type="InParanoid" id="P28911"/>
<dbReference type="OrthoDB" id="6574147at2"/>
<dbReference type="BioCyc" id="EcoCyc:EG11520-MONOMER"/>
<dbReference type="PRO" id="PR:P28911"/>
<dbReference type="Proteomes" id="UP000000625">
    <property type="component" value="Chromosome"/>
</dbReference>
<dbReference type="InterPro" id="IPR028921">
    <property type="entry name" value="NTF2_fold_dom"/>
</dbReference>
<dbReference type="Pfam" id="PF15631">
    <property type="entry name" value="Imm-NTF2-2"/>
    <property type="match status" value="1"/>
</dbReference>
<gene>
    <name type="primary">yhhH</name>
    <name type="ordered locus">b3483</name>
    <name type="ordered locus">JW3449</name>
</gene>
<protein>
    <recommendedName>
        <fullName>Uncharacterized protein YhhH</fullName>
    </recommendedName>
    <alternativeName>
        <fullName>ORF-B2</fullName>
    </alternativeName>
</protein>
<evidence type="ECO:0000305" key="1"/>
<sequence length="127" mass="14531">MSAEFMVICKKILFRNCVIVSLFVFTYNTWAQCNNNIKIMRKYESEGKYTVRNLVKNKAIALELAEIYVKNRYGQDAAEEEKPYEITELTTSWVVEGTIHSDQIAGGVFIIEIGKNDGRILNFGHGK</sequence>
<accession>P28911</accession>
<accession>P76702</accession>
<accession>Q2M7E6</accession>
<keyword id="KW-1185">Reference proteome</keyword>
<name>YHHH_ECOLI</name>
<comment type="sequence caution" evidence="1">
    <conflict type="erroneous initiation">
        <sequence resource="EMBL-CDS" id="AAB18458"/>
    </conflict>
    <text>Truncated N-terminus.</text>
</comment>
<reference key="1">
    <citation type="journal article" date="1993" name="J. Bacteriol.">
        <title>Rhs elements of Escherichia coli K-12: complex composites of shared and unique components that have different evolutionary histories.</title>
        <authorList>
            <person name="Zhao S."/>
            <person name="Sandt C.H."/>
            <person name="Feulner G."/>
            <person name="Vlazny D.A."/>
            <person name="Gray J.A."/>
            <person name="Hill C.W."/>
        </authorList>
    </citation>
    <scope>NUCLEOTIDE SEQUENCE [GENOMIC DNA]</scope>
    <source>
        <strain>K12</strain>
    </source>
</reference>
<reference key="2">
    <citation type="journal article" date="1995" name="Genetics">
        <title>Correlation of Rhs elements with Escherichia coli population structure.</title>
        <authorList>
            <person name="Hill C.W."/>
            <person name="Feulner G."/>
            <person name="Brody M.S."/>
            <person name="Zhao S."/>
            <person name="Sadosky A.B."/>
            <person name="Sandt C.H."/>
        </authorList>
    </citation>
    <scope>NUCLEOTIDE SEQUENCE [GENOMIC DNA]</scope>
    <source>
        <strain>ECOR 32</strain>
    </source>
</reference>
<reference key="3">
    <citation type="journal article" date="1994" name="Nucleic Acids Res.">
        <title>Analysis of the Escherichia coli genome. V. DNA sequence of the region from 76.0 to 81.5 minutes.</title>
        <authorList>
            <person name="Sofia H.J."/>
            <person name="Burland V."/>
            <person name="Daniels D.L."/>
            <person name="Plunkett G. III"/>
            <person name="Blattner F.R."/>
        </authorList>
    </citation>
    <scope>NUCLEOTIDE SEQUENCE [LARGE SCALE GENOMIC DNA]</scope>
    <source>
        <strain>K12 / MG1655 / ATCC 47076</strain>
    </source>
</reference>
<reference key="4">
    <citation type="journal article" date="1997" name="Science">
        <title>The complete genome sequence of Escherichia coli K-12.</title>
        <authorList>
            <person name="Blattner F.R."/>
            <person name="Plunkett G. III"/>
            <person name="Bloch C.A."/>
            <person name="Perna N.T."/>
            <person name="Burland V."/>
            <person name="Riley M."/>
            <person name="Collado-Vides J."/>
            <person name="Glasner J.D."/>
            <person name="Rode C.K."/>
            <person name="Mayhew G.F."/>
            <person name="Gregor J."/>
            <person name="Davis N.W."/>
            <person name="Kirkpatrick H.A."/>
            <person name="Goeden M.A."/>
            <person name="Rose D.J."/>
            <person name="Mau B."/>
            <person name="Shao Y."/>
        </authorList>
    </citation>
    <scope>NUCLEOTIDE SEQUENCE [LARGE SCALE GENOMIC DNA]</scope>
    <source>
        <strain>K12 / MG1655 / ATCC 47076</strain>
    </source>
</reference>
<reference key="5">
    <citation type="journal article" date="2006" name="Mol. Syst. Biol.">
        <title>Highly accurate genome sequences of Escherichia coli K-12 strains MG1655 and W3110.</title>
        <authorList>
            <person name="Hayashi K."/>
            <person name="Morooka N."/>
            <person name="Yamamoto Y."/>
            <person name="Fujita K."/>
            <person name="Isono K."/>
            <person name="Choi S."/>
            <person name="Ohtsubo E."/>
            <person name="Baba T."/>
            <person name="Wanner B.L."/>
            <person name="Mori H."/>
            <person name="Horiuchi T."/>
        </authorList>
    </citation>
    <scope>NUCLEOTIDE SEQUENCE [LARGE SCALE GENOMIC DNA]</scope>
    <source>
        <strain>K12 / W3110 / ATCC 27325 / DSM 5911</strain>
    </source>
</reference>